<accession>Q8RCV9</accession>
<evidence type="ECO:0000255" key="1">
    <source>
        <dbReference type="HAMAP-Rule" id="MF_00259"/>
    </source>
</evidence>
<comment type="function">
    <text evidence="1">The glycine cleavage system catalyzes the degradation of glycine.</text>
</comment>
<comment type="catalytic activity">
    <reaction evidence="1">
        <text>N(6)-[(R)-S(8)-aminomethyldihydrolipoyl]-L-lysyl-[protein] + (6S)-5,6,7,8-tetrahydrofolate = N(6)-[(R)-dihydrolipoyl]-L-lysyl-[protein] + (6R)-5,10-methylene-5,6,7,8-tetrahydrofolate + NH4(+)</text>
        <dbReference type="Rhea" id="RHEA:16945"/>
        <dbReference type="Rhea" id="RHEA-COMP:10475"/>
        <dbReference type="Rhea" id="RHEA-COMP:10492"/>
        <dbReference type="ChEBI" id="CHEBI:15636"/>
        <dbReference type="ChEBI" id="CHEBI:28938"/>
        <dbReference type="ChEBI" id="CHEBI:57453"/>
        <dbReference type="ChEBI" id="CHEBI:83100"/>
        <dbReference type="ChEBI" id="CHEBI:83143"/>
        <dbReference type="EC" id="2.1.2.10"/>
    </reaction>
</comment>
<comment type="subunit">
    <text evidence="1">The glycine cleavage system is composed of four proteins: P, T, L and H.</text>
</comment>
<comment type="similarity">
    <text evidence="1">Belongs to the GcvT family.</text>
</comment>
<proteinExistence type="inferred from homology"/>
<dbReference type="EC" id="2.1.2.10" evidence="1"/>
<dbReference type="EMBL" id="AE008691">
    <property type="protein sequence ID" value="AAM23592.1"/>
    <property type="molecule type" value="Genomic_DNA"/>
</dbReference>
<dbReference type="SMR" id="Q8RCV9"/>
<dbReference type="STRING" id="273068.TTE0296"/>
<dbReference type="KEGG" id="tte:TTE0296"/>
<dbReference type="eggNOG" id="COG0404">
    <property type="taxonomic scope" value="Bacteria"/>
</dbReference>
<dbReference type="HOGENOM" id="CLU_007884_10_2_9"/>
<dbReference type="OrthoDB" id="9774591at2"/>
<dbReference type="Proteomes" id="UP000000555">
    <property type="component" value="Chromosome"/>
</dbReference>
<dbReference type="GO" id="GO:0005829">
    <property type="term" value="C:cytosol"/>
    <property type="evidence" value="ECO:0007669"/>
    <property type="project" value="TreeGrafter"/>
</dbReference>
<dbReference type="GO" id="GO:0005960">
    <property type="term" value="C:glycine cleavage complex"/>
    <property type="evidence" value="ECO:0007669"/>
    <property type="project" value="InterPro"/>
</dbReference>
<dbReference type="GO" id="GO:0004047">
    <property type="term" value="F:aminomethyltransferase activity"/>
    <property type="evidence" value="ECO:0007669"/>
    <property type="project" value="UniProtKB-UniRule"/>
</dbReference>
<dbReference type="GO" id="GO:0008483">
    <property type="term" value="F:transaminase activity"/>
    <property type="evidence" value="ECO:0007669"/>
    <property type="project" value="UniProtKB-KW"/>
</dbReference>
<dbReference type="GO" id="GO:0019464">
    <property type="term" value="P:glycine decarboxylation via glycine cleavage system"/>
    <property type="evidence" value="ECO:0007669"/>
    <property type="project" value="UniProtKB-UniRule"/>
</dbReference>
<dbReference type="FunFam" id="2.40.30.110:FF:000003">
    <property type="entry name" value="Aminomethyltransferase"/>
    <property type="match status" value="1"/>
</dbReference>
<dbReference type="FunFam" id="3.30.70.1400:FF:000001">
    <property type="entry name" value="Aminomethyltransferase"/>
    <property type="match status" value="1"/>
</dbReference>
<dbReference type="FunFam" id="4.10.1250.10:FF:000001">
    <property type="entry name" value="Aminomethyltransferase"/>
    <property type="match status" value="1"/>
</dbReference>
<dbReference type="Gene3D" id="2.40.30.110">
    <property type="entry name" value="Aminomethyltransferase beta-barrel domains"/>
    <property type="match status" value="1"/>
</dbReference>
<dbReference type="Gene3D" id="3.30.70.1400">
    <property type="entry name" value="Aminomethyltransferase beta-barrel domains"/>
    <property type="match status" value="1"/>
</dbReference>
<dbReference type="Gene3D" id="4.10.1250.10">
    <property type="entry name" value="Aminomethyltransferase fragment"/>
    <property type="match status" value="1"/>
</dbReference>
<dbReference type="Gene3D" id="3.30.1360.120">
    <property type="entry name" value="Probable tRNA modification gtpase trme, domain 1"/>
    <property type="match status" value="1"/>
</dbReference>
<dbReference type="HAMAP" id="MF_00259">
    <property type="entry name" value="GcvT"/>
    <property type="match status" value="1"/>
</dbReference>
<dbReference type="InterPro" id="IPR006223">
    <property type="entry name" value="GCS_T"/>
</dbReference>
<dbReference type="InterPro" id="IPR022903">
    <property type="entry name" value="GCS_T_bac"/>
</dbReference>
<dbReference type="InterPro" id="IPR013977">
    <property type="entry name" value="GCST_C"/>
</dbReference>
<dbReference type="InterPro" id="IPR006222">
    <property type="entry name" value="GCV_T_N"/>
</dbReference>
<dbReference type="InterPro" id="IPR028896">
    <property type="entry name" value="GcvT/YgfZ/DmdA"/>
</dbReference>
<dbReference type="InterPro" id="IPR029043">
    <property type="entry name" value="GcvT/YgfZ_C"/>
</dbReference>
<dbReference type="InterPro" id="IPR027266">
    <property type="entry name" value="TrmE/GcvT_dom1"/>
</dbReference>
<dbReference type="NCBIfam" id="TIGR00528">
    <property type="entry name" value="gcvT"/>
    <property type="match status" value="1"/>
</dbReference>
<dbReference type="NCBIfam" id="NF001567">
    <property type="entry name" value="PRK00389.1"/>
    <property type="match status" value="1"/>
</dbReference>
<dbReference type="PANTHER" id="PTHR43757">
    <property type="entry name" value="AMINOMETHYLTRANSFERASE"/>
    <property type="match status" value="1"/>
</dbReference>
<dbReference type="PANTHER" id="PTHR43757:SF2">
    <property type="entry name" value="AMINOMETHYLTRANSFERASE, MITOCHONDRIAL"/>
    <property type="match status" value="1"/>
</dbReference>
<dbReference type="Pfam" id="PF01571">
    <property type="entry name" value="GCV_T"/>
    <property type="match status" value="1"/>
</dbReference>
<dbReference type="Pfam" id="PF08669">
    <property type="entry name" value="GCV_T_C"/>
    <property type="match status" value="1"/>
</dbReference>
<dbReference type="PIRSF" id="PIRSF006487">
    <property type="entry name" value="GcvT"/>
    <property type="match status" value="1"/>
</dbReference>
<dbReference type="SUPFAM" id="SSF101790">
    <property type="entry name" value="Aminomethyltransferase beta-barrel domain"/>
    <property type="match status" value="1"/>
</dbReference>
<dbReference type="SUPFAM" id="SSF103025">
    <property type="entry name" value="Folate-binding domain"/>
    <property type="match status" value="1"/>
</dbReference>
<gene>
    <name evidence="1" type="primary">gcvT</name>
    <name type="ordered locus">TTE0296</name>
</gene>
<feature type="chain" id="PRO_0000122613" description="Aminomethyltransferase">
    <location>
        <begin position="1"/>
        <end position="374"/>
    </location>
</feature>
<sequence>MKGCDSLDNLKKTPLYEIYPKYNAKIIDFAGWAMPVQFESIISEHEAVRNAAGLFDVSHMGEIIVKGKDAFPFLQNLLTNDLSKLNDNQVLYTFMCNHNGGVIDDLLVYKYSNNYYLLVVNAANIEKDYKWMLNNAGIYKVEIENVSDKIAELAIQGPKAEEILQKLTDEDLSQIKFFYFKDKVKIAGVECLVSRTGYTGEDGFEIYMPNEHAVTLWEKILEAGKDYGLKPAGLGARDTLRFEAGLPLYGNELGEDITPLEAGLGFFVKFDKGNFIGKDALLKQKEQGLKRKLVGFEMIGNGIPRHGYEVQADNQKIGYVTTGYFSPTLKKNIGLALIDSKYAQIGNQIEVIIRNKPLKAVIVDKNFYKKNYKK</sequence>
<organism>
    <name type="scientific">Caldanaerobacter subterraneus subsp. tengcongensis (strain DSM 15242 / JCM 11007 / NBRC 100824 / MB4)</name>
    <name type="common">Thermoanaerobacter tengcongensis</name>
    <dbReference type="NCBI Taxonomy" id="273068"/>
    <lineage>
        <taxon>Bacteria</taxon>
        <taxon>Bacillati</taxon>
        <taxon>Bacillota</taxon>
        <taxon>Clostridia</taxon>
        <taxon>Thermoanaerobacterales</taxon>
        <taxon>Thermoanaerobacteraceae</taxon>
        <taxon>Caldanaerobacter</taxon>
    </lineage>
</organism>
<keyword id="KW-0032">Aminotransferase</keyword>
<keyword id="KW-1185">Reference proteome</keyword>
<keyword id="KW-0808">Transferase</keyword>
<reference key="1">
    <citation type="journal article" date="2002" name="Genome Res.">
        <title>A complete sequence of the T. tengcongensis genome.</title>
        <authorList>
            <person name="Bao Q."/>
            <person name="Tian Y."/>
            <person name="Li W."/>
            <person name="Xu Z."/>
            <person name="Xuan Z."/>
            <person name="Hu S."/>
            <person name="Dong W."/>
            <person name="Yang J."/>
            <person name="Chen Y."/>
            <person name="Xue Y."/>
            <person name="Xu Y."/>
            <person name="Lai X."/>
            <person name="Huang L."/>
            <person name="Dong X."/>
            <person name="Ma Y."/>
            <person name="Ling L."/>
            <person name="Tan H."/>
            <person name="Chen R."/>
            <person name="Wang J."/>
            <person name="Yu J."/>
            <person name="Yang H."/>
        </authorList>
    </citation>
    <scope>NUCLEOTIDE SEQUENCE [LARGE SCALE GENOMIC DNA]</scope>
    <source>
        <strain>DSM 15242 / JCM 11007 / NBRC 100824 / MB4</strain>
    </source>
</reference>
<name>GCST_CALS4</name>
<protein>
    <recommendedName>
        <fullName evidence="1">Aminomethyltransferase</fullName>
        <ecNumber evidence="1">2.1.2.10</ecNumber>
    </recommendedName>
    <alternativeName>
        <fullName evidence="1">Glycine cleavage system T protein</fullName>
    </alternativeName>
</protein>